<sequence>MDEGVNLVFHKKVIDGTAIKRLISRLIDHFGMAHTSHILDQVKTLGFQQATATSISLGIDDLLTIPSKGWLVQDAEQQSLSLEKHHHYGNVHAVEKLRQSIEVWYATSEYLRQEMNPNFRMTDPFNPVHIMSFSGARGNASQVHQLVGMRGLMSDPQGQMIDLPIQSNLREGLSLTEYIISCYGARKGVVDTAVRTSDAGYLTRRLVEVVQHIVVRRTDCGTLRGISVSPRRMPERIFIQTLIGRVLADDIYIGSRCIAIRNQDIGIGLVNRFITFRIQPISIRTPFTCRSTSWICRLCYGRSPTHGDLVELGEAVGIIAGQSIGEPGTQLTLRTFHTGGVFTGGTAEHVRAPSNGKIKFNFNEALVHPARTRHGHPALLCSMDLDVTIESEDILHNLTIPPKSFLLVQNNQYVESEQVIAEICAGTSTFHFKERVRKHIYSDSEGEMHWSTDVYHAPEFTYSNVHLLPKTSHLWILSGGSCRSRGAPFSLHKDQDQMNPRSTERERRYLSSLSANNDQIRYKFFSSSFSGKKKDDRSPGYSEMNRIICTLHCNLIYPSILRENSDLLAKRRRNRLVIPVQSSQEREKELIPHSGISIELPINGIFRKKSILAFFDDPRYRTKSSGITQYETMGMHSIVKKEGLVDYRGINEFKPKYQMTIDRFFFIPEEVHILPESSSIMVRNNSLIGVDTRIALNTRSRAGGLVRVERKKRGIALQIFSGTIHFPGETDKISWDSGILIPPGTGKRNSKESKKWKNGIYVQRITPTKKKHFVLFRPVVTYEIADGLNLARLFPPDLCQEKDNMQLQIVNYIVYGNGKPIREISDTSIQLVRTWFILNWDQDKKSASAEAAHASFVEVRAKGLIRDFLRIDLVKSPILDPRKRNDPSGSGLISDNVSDHTNINPFYSKPKMKQSPRQNHGTIRTLLNQNKECPSLMILSASNCFRMGPFNDVKSQNVIKESIKKDAIIQIRNSIGPLGTALQVVNFDSFYYFITHNQVLLTKYLQVENLKQTFQVLQYYLMDESGRIYNPDPRSNIVLNSFNLSWYFLPHNNYENSCEEISTIVSLGQFICENGCIAKNGPYLRSGQVLIVQLDSVVIRSAKPYLATPGATVHGHYGEILYDGDTVVTFLYEKSRSGDITQGLPKVEQVLEVRSVDSISVNLEKRVENWNEHITRILGFPWGFLIGAELTIVQSRISLVNKIQKVYRSQGVQIHNRHIEIIVRQITSKVLVSEDGMSNVFLPRELIGLLRAERTGRALEESICYKAFLLGITRTSLNTQSFISEASFQETARVLAKAALRGRIDWLKGLKENVVIGGMIPVGTGFKGLVHCSKQHKSIPKNKHFFEGEIRDILFHHRELFDSCISKNFHDTPEQSFRVFNDS</sequence>
<gene>
    <name evidence="1" type="primary">rpoC2</name>
</gene>
<evidence type="ECO:0000255" key="1">
    <source>
        <dbReference type="HAMAP-Rule" id="MF_01324"/>
    </source>
</evidence>
<comment type="function">
    <text evidence="1">DNA-dependent RNA polymerase catalyzes the transcription of DNA into RNA using the four ribonucleoside triphosphates as substrates.</text>
</comment>
<comment type="catalytic activity">
    <reaction evidence="1">
        <text>RNA(n) + a ribonucleoside 5'-triphosphate = RNA(n+1) + diphosphate</text>
        <dbReference type="Rhea" id="RHEA:21248"/>
        <dbReference type="Rhea" id="RHEA-COMP:14527"/>
        <dbReference type="Rhea" id="RHEA-COMP:17342"/>
        <dbReference type="ChEBI" id="CHEBI:33019"/>
        <dbReference type="ChEBI" id="CHEBI:61557"/>
        <dbReference type="ChEBI" id="CHEBI:140395"/>
        <dbReference type="EC" id="2.7.7.6"/>
    </reaction>
</comment>
<comment type="cofactor">
    <cofactor evidence="1">
        <name>Zn(2+)</name>
        <dbReference type="ChEBI" id="CHEBI:29105"/>
    </cofactor>
    <text evidence="1">Binds 1 Zn(2+) ion per subunit.</text>
</comment>
<comment type="subunit">
    <text evidence="1">In plastids the minimal PEP RNA polymerase catalytic core is composed of four subunits: alpha, beta, beta', and beta''. When a (nuclear-encoded) sigma factor is associated with the core the holoenzyme is formed, which can initiate transcription.</text>
</comment>
<comment type="subcellular location">
    <subcellularLocation>
        <location evidence="1">Plastid</location>
        <location evidence="1">Chloroplast</location>
    </subcellularLocation>
</comment>
<comment type="similarity">
    <text evidence="1">Belongs to the RNA polymerase beta' chain family. RpoC2 subfamily.</text>
</comment>
<accession>Q9MTM3</accession>
<geneLocation type="chloroplast"/>
<organism>
    <name type="scientific">Oenothera elata subsp. hookeri</name>
    <name type="common">Hooker's evening primrose</name>
    <name type="synonym">Oenothera hookeri</name>
    <dbReference type="NCBI Taxonomy" id="85636"/>
    <lineage>
        <taxon>Eukaryota</taxon>
        <taxon>Viridiplantae</taxon>
        <taxon>Streptophyta</taxon>
        <taxon>Embryophyta</taxon>
        <taxon>Tracheophyta</taxon>
        <taxon>Spermatophyta</taxon>
        <taxon>Magnoliopsida</taxon>
        <taxon>eudicotyledons</taxon>
        <taxon>Gunneridae</taxon>
        <taxon>Pentapetalae</taxon>
        <taxon>rosids</taxon>
        <taxon>malvids</taxon>
        <taxon>Myrtales</taxon>
        <taxon>Onagraceae</taxon>
        <taxon>Onagroideae</taxon>
        <taxon>Onagreae</taxon>
        <taxon>Oenothera</taxon>
    </lineage>
</organism>
<reference key="1">
    <citation type="journal article" date="2000" name="Mol. Gen. Genet.">
        <title>Complete nucleotide sequence of the Oenothera elata plastid chromosome, representing plastome I of the five distinguishable Euoenothera plastomes.</title>
        <authorList>
            <person name="Hupfer H."/>
            <person name="Swiatek M."/>
            <person name="Hornung S."/>
            <person name="Herrmann R.G."/>
            <person name="Maier R.M."/>
            <person name="Chiu W.-L."/>
            <person name="Sears B."/>
        </authorList>
    </citation>
    <scope>NUCLEOTIDE SEQUENCE [LARGE SCALE GENOMIC DNA]</scope>
    <source>
        <strain>cv. Johansen</strain>
    </source>
</reference>
<reference key="2">
    <citation type="journal article" date="2008" name="Nucleic Acids Res.">
        <title>The complete nucleotide sequences of the five genetically distinct plastid genomes of Oenothera, subsection Oenothera: I. Sequence evaluation and plastome evolution.</title>
        <authorList>
            <person name="Greiner S."/>
            <person name="Wang X."/>
            <person name="Rauwolf U."/>
            <person name="Silber M.V."/>
            <person name="Mayer K."/>
            <person name="Meurer J."/>
            <person name="Haberer G."/>
            <person name="Herrmann R.G."/>
        </authorList>
    </citation>
    <scope>SEQUENCE REVISION TO 75; 277; 289; 292; 538-541; 944 AND 1381-1383</scope>
</reference>
<dbReference type="EC" id="2.7.7.6" evidence="1"/>
<dbReference type="EMBL" id="AJ271079">
    <property type="protein sequence ID" value="CAB67153.2"/>
    <property type="molecule type" value="Genomic_DNA"/>
</dbReference>
<dbReference type="RefSeq" id="NP_084688.2">
    <property type="nucleotide sequence ID" value="NC_002693.2"/>
</dbReference>
<dbReference type="SMR" id="Q9MTM3"/>
<dbReference type="GeneID" id="802800"/>
<dbReference type="GO" id="GO:0009507">
    <property type="term" value="C:chloroplast"/>
    <property type="evidence" value="ECO:0007669"/>
    <property type="project" value="UniProtKB-SubCell"/>
</dbReference>
<dbReference type="GO" id="GO:0000428">
    <property type="term" value="C:DNA-directed RNA polymerase complex"/>
    <property type="evidence" value="ECO:0007669"/>
    <property type="project" value="UniProtKB-KW"/>
</dbReference>
<dbReference type="GO" id="GO:0005739">
    <property type="term" value="C:mitochondrion"/>
    <property type="evidence" value="ECO:0007669"/>
    <property type="project" value="GOC"/>
</dbReference>
<dbReference type="GO" id="GO:0003677">
    <property type="term" value="F:DNA binding"/>
    <property type="evidence" value="ECO:0007669"/>
    <property type="project" value="UniProtKB-UniRule"/>
</dbReference>
<dbReference type="GO" id="GO:0003899">
    <property type="term" value="F:DNA-directed RNA polymerase activity"/>
    <property type="evidence" value="ECO:0007669"/>
    <property type="project" value="UniProtKB-UniRule"/>
</dbReference>
<dbReference type="GO" id="GO:0008270">
    <property type="term" value="F:zinc ion binding"/>
    <property type="evidence" value="ECO:0007669"/>
    <property type="project" value="UniProtKB-UniRule"/>
</dbReference>
<dbReference type="GO" id="GO:0006351">
    <property type="term" value="P:DNA-templated transcription"/>
    <property type="evidence" value="ECO:0007669"/>
    <property type="project" value="UniProtKB-UniRule"/>
</dbReference>
<dbReference type="CDD" id="cd02655">
    <property type="entry name" value="RNAP_beta'_C"/>
    <property type="match status" value="1"/>
</dbReference>
<dbReference type="FunFam" id="1.10.132.30:FF:000002">
    <property type="entry name" value="DNA-directed RNA polymerase subunit beta"/>
    <property type="match status" value="1"/>
</dbReference>
<dbReference type="Gene3D" id="1.10.132.30">
    <property type="match status" value="1"/>
</dbReference>
<dbReference type="Gene3D" id="1.10.150.390">
    <property type="match status" value="1"/>
</dbReference>
<dbReference type="Gene3D" id="1.10.1790.20">
    <property type="match status" value="1"/>
</dbReference>
<dbReference type="Gene3D" id="1.10.274.100">
    <property type="entry name" value="RNA polymerase Rpb1, domain 3"/>
    <property type="match status" value="1"/>
</dbReference>
<dbReference type="HAMAP" id="MF_01324">
    <property type="entry name" value="RNApol_bact_RpoC2"/>
    <property type="match status" value="1"/>
</dbReference>
<dbReference type="InterPro" id="IPR012756">
    <property type="entry name" value="DNA-dir_RpoC2_beta_pp"/>
</dbReference>
<dbReference type="InterPro" id="IPR050254">
    <property type="entry name" value="RNA_pol_beta''_euk"/>
</dbReference>
<dbReference type="InterPro" id="IPR042102">
    <property type="entry name" value="RNA_pol_Rpb1_3_sf"/>
</dbReference>
<dbReference type="InterPro" id="IPR007083">
    <property type="entry name" value="RNA_pol_Rpb1_4"/>
</dbReference>
<dbReference type="InterPro" id="IPR007081">
    <property type="entry name" value="RNA_pol_Rpb1_5"/>
</dbReference>
<dbReference type="InterPro" id="IPR038120">
    <property type="entry name" value="Rpb1_funnel_sf"/>
</dbReference>
<dbReference type="NCBIfam" id="TIGR02388">
    <property type="entry name" value="rpoC2_cyan"/>
    <property type="match status" value="1"/>
</dbReference>
<dbReference type="PANTHER" id="PTHR34995">
    <property type="entry name" value="DNA-DIRECTED RNA POLYMERASE SUBUNIT BETA"/>
    <property type="match status" value="1"/>
</dbReference>
<dbReference type="PANTHER" id="PTHR34995:SF1">
    <property type="entry name" value="DNA-DIRECTED RNA POLYMERASE SUBUNIT BETA"/>
    <property type="match status" value="1"/>
</dbReference>
<dbReference type="Pfam" id="PF05000">
    <property type="entry name" value="RNA_pol_Rpb1_4"/>
    <property type="match status" value="1"/>
</dbReference>
<dbReference type="Pfam" id="PF04998">
    <property type="entry name" value="RNA_pol_Rpb1_5"/>
    <property type="match status" value="2"/>
</dbReference>
<dbReference type="SUPFAM" id="SSF64484">
    <property type="entry name" value="beta and beta-prime subunits of DNA dependent RNA-polymerase"/>
    <property type="match status" value="1"/>
</dbReference>
<protein>
    <recommendedName>
        <fullName evidence="1">DNA-directed RNA polymerase subunit beta''</fullName>
        <ecNumber evidence="1">2.7.7.6</ecNumber>
    </recommendedName>
    <alternativeName>
        <fullName evidence="1">PEP</fullName>
    </alternativeName>
    <alternativeName>
        <fullName evidence="1">Plastid-encoded RNA polymerase subunit beta''</fullName>
        <shortName evidence="1">RNA polymerase subunit beta''</shortName>
    </alternativeName>
</protein>
<proteinExistence type="inferred from homology"/>
<keyword id="KW-0150">Chloroplast</keyword>
<keyword id="KW-0240">DNA-directed RNA polymerase</keyword>
<keyword id="KW-0479">Metal-binding</keyword>
<keyword id="KW-0548">Nucleotidyltransferase</keyword>
<keyword id="KW-0934">Plastid</keyword>
<keyword id="KW-0804">Transcription</keyword>
<keyword id="KW-0808">Transferase</keyword>
<keyword id="KW-0862">Zinc</keyword>
<feature type="chain" id="PRO_0000067935" description="DNA-directed RNA polymerase subunit beta''">
    <location>
        <begin position="1"/>
        <end position="1383"/>
    </location>
</feature>
<feature type="binding site" evidence="1">
    <location>
        <position position="220"/>
    </location>
    <ligand>
        <name>Zn(2+)</name>
        <dbReference type="ChEBI" id="CHEBI:29105"/>
    </ligand>
</feature>
<feature type="binding site" evidence="1">
    <location>
        <position position="289"/>
    </location>
    <ligand>
        <name>Zn(2+)</name>
        <dbReference type="ChEBI" id="CHEBI:29105"/>
    </ligand>
</feature>
<feature type="binding site" evidence="1">
    <location>
        <position position="296"/>
    </location>
    <ligand>
        <name>Zn(2+)</name>
        <dbReference type="ChEBI" id="CHEBI:29105"/>
    </ligand>
</feature>
<feature type="binding site" evidence="1">
    <location>
        <position position="299"/>
    </location>
    <ligand>
        <name>Zn(2+)</name>
        <dbReference type="ChEBI" id="CHEBI:29105"/>
    </ligand>
</feature>
<name>RPOC2_OENEH</name>